<feature type="chain" id="PRO_0000170460" description="Nucleoid-associated protein UU088">
    <location>
        <begin position="1"/>
        <end position="99"/>
    </location>
</feature>
<proteinExistence type="inferred from homology"/>
<protein>
    <recommendedName>
        <fullName evidence="1">Nucleoid-associated protein UU088</fullName>
    </recommendedName>
</protein>
<gene>
    <name type="ordered locus">UU088</name>
</gene>
<reference key="1">
    <citation type="journal article" date="2000" name="Nature">
        <title>The complete sequence of the mucosal pathogen Ureaplasma urealyticum.</title>
        <authorList>
            <person name="Glass J.I."/>
            <person name="Lefkowitz E.J."/>
            <person name="Glass J.S."/>
            <person name="Heiner C.R."/>
            <person name="Chen E.Y."/>
            <person name="Cassell G.H."/>
        </authorList>
    </citation>
    <scope>NUCLEOTIDE SEQUENCE [LARGE SCALE GENOMIC DNA]</scope>
    <source>
        <strain>ATCC 700970</strain>
    </source>
</reference>
<evidence type="ECO:0000255" key="1">
    <source>
        <dbReference type="HAMAP-Rule" id="MF_00274"/>
    </source>
</evidence>
<accession>Q9PR57</accession>
<name>Y088_UREPA</name>
<dbReference type="EMBL" id="AF222894">
    <property type="protein sequence ID" value="AAF30493.1"/>
    <property type="molecule type" value="Genomic_DNA"/>
</dbReference>
<dbReference type="RefSeq" id="WP_006689002.1">
    <property type="nucleotide sequence ID" value="NC_002162.1"/>
</dbReference>
<dbReference type="SMR" id="Q9PR57"/>
<dbReference type="STRING" id="273119.UU088"/>
<dbReference type="EnsemblBacteria" id="AAF30493">
    <property type="protein sequence ID" value="AAF30493"/>
    <property type="gene ID" value="UU088"/>
</dbReference>
<dbReference type="GeneID" id="29672728"/>
<dbReference type="KEGG" id="uur:UU088"/>
<dbReference type="eggNOG" id="COG0718">
    <property type="taxonomic scope" value="Bacteria"/>
</dbReference>
<dbReference type="HOGENOM" id="CLU_140930_1_2_14"/>
<dbReference type="OrthoDB" id="399030at2"/>
<dbReference type="Proteomes" id="UP000000423">
    <property type="component" value="Chromosome"/>
</dbReference>
<dbReference type="GO" id="GO:0043590">
    <property type="term" value="C:bacterial nucleoid"/>
    <property type="evidence" value="ECO:0007669"/>
    <property type="project" value="UniProtKB-UniRule"/>
</dbReference>
<dbReference type="GO" id="GO:0005737">
    <property type="term" value="C:cytoplasm"/>
    <property type="evidence" value="ECO:0007669"/>
    <property type="project" value="UniProtKB-UniRule"/>
</dbReference>
<dbReference type="GO" id="GO:0003677">
    <property type="term" value="F:DNA binding"/>
    <property type="evidence" value="ECO:0007669"/>
    <property type="project" value="UniProtKB-UniRule"/>
</dbReference>
<dbReference type="Gene3D" id="3.30.1310.10">
    <property type="entry name" value="Nucleoid-associated protein YbaB-like domain"/>
    <property type="match status" value="1"/>
</dbReference>
<dbReference type="HAMAP" id="MF_00274">
    <property type="entry name" value="DNA_YbaB_EbfC"/>
    <property type="match status" value="1"/>
</dbReference>
<dbReference type="InterPro" id="IPR036894">
    <property type="entry name" value="YbaB-like_sf"/>
</dbReference>
<dbReference type="InterPro" id="IPR004401">
    <property type="entry name" value="YbaB/EbfC"/>
</dbReference>
<dbReference type="NCBIfam" id="TIGR00103">
    <property type="entry name" value="DNA_YbaB_EbfC"/>
    <property type="match status" value="1"/>
</dbReference>
<dbReference type="Pfam" id="PF02575">
    <property type="entry name" value="YbaB_DNA_bd"/>
    <property type="match status" value="1"/>
</dbReference>
<dbReference type="PIRSF" id="PIRSF004555">
    <property type="entry name" value="UCP004555"/>
    <property type="match status" value="1"/>
</dbReference>
<dbReference type="SUPFAM" id="SSF82607">
    <property type="entry name" value="YbaB-like"/>
    <property type="match status" value="1"/>
</dbReference>
<keyword id="KW-0963">Cytoplasm</keyword>
<keyword id="KW-0238">DNA-binding</keyword>
<keyword id="KW-1185">Reference proteome</keyword>
<comment type="function">
    <text evidence="1">Binds to DNA and alters its conformation. May be involved in regulation of gene expression, nucleoid organization and DNA protection.</text>
</comment>
<comment type="subunit">
    <text evidence="1">Homodimer.</text>
</comment>
<comment type="subcellular location">
    <subcellularLocation>
        <location evidence="1">Cytoplasm</location>
        <location evidence="1">Nucleoid</location>
    </subcellularLocation>
</comment>
<comment type="similarity">
    <text evidence="1">Belongs to the YbaB/EbfC family.</text>
</comment>
<sequence length="99" mass="11369">MDFQKLAQELKKMQNTLSKKQKEFEEKVFDFDYKGYVLVKIKGDLNIEAIEIKTEIVDPEDKETLQDILRAAINEAISITCKERDAIMNATIPKGTGLF</sequence>
<organism>
    <name type="scientific">Ureaplasma parvum serovar 3 (strain ATCC 700970)</name>
    <dbReference type="NCBI Taxonomy" id="273119"/>
    <lineage>
        <taxon>Bacteria</taxon>
        <taxon>Bacillati</taxon>
        <taxon>Mycoplasmatota</taxon>
        <taxon>Mycoplasmoidales</taxon>
        <taxon>Mycoplasmoidaceae</taxon>
        <taxon>Ureaplasma</taxon>
    </lineage>
</organism>